<reference key="1">
    <citation type="journal article" date="2007" name="Genome Biol.">
        <title>Comparison of Francisella tularensis genomes reveals evolutionary events associated with the emergence of human pathogenic strains.</title>
        <authorList>
            <person name="Rohmer L."/>
            <person name="Fong C."/>
            <person name="Abmayr S."/>
            <person name="Wasnick M."/>
            <person name="Larson Freeman T.J."/>
            <person name="Radey M."/>
            <person name="Guina T."/>
            <person name="Svensson K."/>
            <person name="Hayden H.S."/>
            <person name="Jacobs M."/>
            <person name="Gallagher L.A."/>
            <person name="Manoil C."/>
            <person name="Ernst R.K."/>
            <person name="Drees B."/>
            <person name="Buckley D."/>
            <person name="Haugen E."/>
            <person name="Bovee D."/>
            <person name="Zhou Y."/>
            <person name="Chang J."/>
            <person name="Levy R."/>
            <person name="Lim R."/>
            <person name="Gillett W."/>
            <person name="Guenthener D."/>
            <person name="Kang A."/>
            <person name="Shaffer S.A."/>
            <person name="Taylor G."/>
            <person name="Chen J."/>
            <person name="Gallis B."/>
            <person name="D'Argenio D.A."/>
            <person name="Forsman M."/>
            <person name="Olson M.V."/>
            <person name="Goodlett D.R."/>
            <person name="Kaul R."/>
            <person name="Miller S.I."/>
            <person name="Brittnacher M.J."/>
        </authorList>
    </citation>
    <scope>NUCLEOTIDE SEQUENCE [LARGE SCALE GENOMIC DNA]</scope>
    <source>
        <strain>U112</strain>
    </source>
</reference>
<feature type="chain" id="PRO_1000071916" description="Nucleoid-associated protein FTN_1196">
    <location>
        <begin position="1"/>
        <end position="112"/>
    </location>
</feature>
<feature type="region of interest" description="Disordered" evidence="2">
    <location>
        <begin position="1"/>
        <end position="27"/>
    </location>
</feature>
<feature type="compositionally biased region" description="Basic and acidic residues" evidence="2">
    <location>
        <begin position="17"/>
        <end position="27"/>
    </location>
</feature>
<dbReference type="EMBL" id="CP000439">
    <property type="protein sequence ID" value="ABK90082.1"/>
    <property type="molecule type" value="Genomic_DNA"/>
</dbReference>
<dbReference type="RefSeq" id="WP_003034338.1">
    <property type="nucleotide sequence ID" value="NZ_CP009633.1"/>
</dbReference>
<dbReference type="SMR" id="A0Q767"/>
<dbReference type="KEGG" id="ftn:FTN_1196"/>
<dbReference type="KEGG" id="ftx:AW25_811"/>
<dbReference type="BioCyc" id="FTUL401614:G1G75-1239-MONOMER"/>
<dbReference type="Proteomes" id="UP000000762">
    <property type="component" value="Chromosome"/>
</dbReference>
<dbReference type="GO" id="GO:0043590">
    <property type="term" value="C:bacterial nucleoid"/>
    <property type="evidence" value="ECO:0007669"/>
    <property type="project" value="UniProtKB-UniRule"/>
</dbReference>
<dbReference type="GO" id="GO:0005829">
    <property type="term" value="C:cytosol"/>
    <property type="evidence" value="ECO:0007669"/>
    <property type="project" value="TreeGrafter"/>
</dbReference>
<dbReference type="GO" id="GO:0003677">
    <property type="term" value="F:DNA binding"/>
    <property type="evidence" value="ECO:0007669"/>
    <property type="project" value="UniProtKB-UniRule"/>
</dbReference>
<dbReference type="Gene3D" id="3.30.1310.10">
    <property type="entry name" value="Nucleoid-associated protein YbaB-like domain"/>
    <property type="match status" value="1"/>
</dbReference>
<dbReference type="HAMAP" id="MF_00274">
    <property type="entry name" value="DNA_YbaB_EbfC"/>
    <property type="match status" value="1"/>
</dbReference>
<dbReference type="InterPro" id="IPR036894">
    <property type="entry name" value="YbaB-like_sf"/>
</dbReference>
<dbReference type="InterPro" id="IPR004401">
    <property type="entry name" value="YbaB/EbfC"/>
</dbReference>
<dbReference type="NCBIfam" id="TIGR00103">
    <property type="entry name" value="DNA_YbaB_EbfC"/>
    <property type="match status" value="1"/>
</dbReference>
<dbReference type="PANTHER" id="PTHR33449">
    <property type="entry name" value="NUCLEOID-ASSOCIATED PROTEIN YBAB"/>
    <property type="match status" value="1"/>
</dbReference>
<dbReference type="PANTHER" id="PTHR33449:SF1">
    <property type="entry name" value="NUCLEOID-ASSOCIATED PROTEIN YBAB"/>
    <property type="match status" value="1"/>
</dbReference>
<dbReference type="Pfam" id="PF02575">
    <property type="entry name" value="YbaB_DNA_bd"/>
    <property type="match status" value="1"/>
</dbReference>
<dbReference type="PIRSF" id="PIRSF004555">
    <property type="entry name" value="UCP004555"/>
    <property type="match status" value="1"/>
</dbReference>
<dbReference type="SUPFAM" id="SSF82607">
    <property type="entry name" value="YbaB-like"/>
    <property type="match status" value="1"/>
</dbReference>
<evidence type="ECO:0000255" key="1">
    <source>
        <dbReference type="HAMAP-Rule" id="MF_00274"/>
    </source>
</evidence>
<evidence type="ECO:0000256" key="2">
    <source>
        <dbReference type="SAM" id="MobiDB-lite"/>
    </source>
</evidence>
<sequence length="112" mass="12302">MNFDMSKLMQQAQKMQEQMKKAQQERENMEVIGESGAGLVTVTMTGKYDVKSVSIDNSLMSEDKEILEDLIAAAVNSAVKKVEENSTASSDIHKMAKDAGIDLPSGINFPFK</sequence>
<name>Y1196_FRATN</name>
<gene>
    <name type="ordered locus">FTN_1196</name>
</gene>
<protein>
    <recommendedName>
        <fullName evidence="1">Nucleoid-associated protein FTN_1196</fullName>
    </recommendedName>
</protein>
<keyword id="KW-0963">Cytoplasm</keyword>
<keyword id="KW-0238">DNA-binding</keyword>
<organism>
    <name type="scientific">Francisella tularensis subsp. novicida (strain U112)</name>
    <dbReference type="NCBI Taxonomy" id="401614"/>
    <lineage>
        <taxon>Bacteria</taxon>
        <taxon>Pseudomonadati</taxon>
        <taxon>Pseudomonadota</taxon>
        <taxon>Gammaproteobacteria</taxon>
        <taxon>Thiotrichales</taxon>
        <taxon>Francisellaceae</taxon>
        <taxon>Francisella</taxon>
    </lineage>
</organism>
<accession>A0Q767</accession>
<comment type="function">
    <text evidence="1">Binds to DNA and alters its conformation. May be involved in regulation of gene expression, nucleoid organization and DNA protection.</text>
</comment>
<comment type="subunit">
    <text evidence="1">Homodimer.</text>
</comment>
<comment type="subcellular location">
    <subcellularLocation>
        <location evidence="1">Cytoplasm</location>
        <location evidence="1">Nucleoid</location>
    </subcellularLocation>
</comment>
<comment type="similarity">
    <text evidence="1">Belongs to the YbaB/EbfC family.</text>
</comment>
<proteinExistence type="inferred from homology"/>